<comment type="function">
    <text>Core component of nucleosome. Nucleosomes wrap and compact DNA into chromatin, limiting DNA accessibility to the cellular machineries which require DNA as a template. Histones thereby play a central role in transcription regulation, DNA repair, DNA replication and chromosomal stability. DNA accessibility is regulated via a complex set of post-translational modifications of histones, also called histone code, and nucleosome remodeling.</text>
</comment>
<comment type="subunit">
    <text>The nucleosome is a histone octamer containing two molecules each of H2A, H2B, H3 and H4 assembled in one H3-H4 heterotetramer and two H2A-H2B heterodimers. The octamer wraps approximately 147 bp of DNA.</text>
</comment>
<comment type="subcellular location">
    <subcellularLocation>
        <location evidence="1">Nucleus</location>
    </subcellularLocation>
    <subcellularLocation>
        <location evidence="1">Chromosome</location>
    </subcellularLocation>
</comment>
<comment type="similarity">
    <text evidence="3">Belongs to the histone H3 family.</text>
</comment>
<organism>
    <name type="scientific">Tetrahymena australis</name>
    <dbReference type="NCBI Taxonomy" id="5892"/>
    <lineage>
        <taxon>Eukaryota</taxon>
        <taxon>Sar</taxon>
        <taxon>Alveolata</taxon>
        <taxon>Ciliophora</taxon>
        <taxon>Intramacronucleata</taxon>
        <taxon>Oligohymenophorea</taxon>
        <taxon>Hymenostomatida</taxon>
        <taxon>Tetrahymenina</taxon>
        <taxon>Tetrahymenidae</taxon>
        <taxon>Tetrahymena</taxon>
    </lineage>
</organism>
<protein>
    <recommendedName>
        <fullName>Histone H3.2</fullName>
    </recommendedName>
</protein>
<name>H32_TETAU</name>
<reference key="1">
    <citation type="journal article" date="1990" name="Nucleic Acids Res.">
        <title>Characterization of the promoter region of Tetrahymena genes.</title>
        <authorList>
            <person name="Brunk C.F."/>
            <person name="Sadler L.A."/>
        </authorList>
    </citation>
    <scope>NUCLEOTIDE SEQUENCE [GENOMIC DNA]</scope>
</reference>
<reference key="2">
    <citation type="journal article" date="1990" name="J. Mol. Evol.">
        <title>Phylogenetic relationships among Tetrahymena species determined using the polymerase chain reaction.</title>
        <authorList>
            <person name="Brunk C.F."/>
            <person name="Kahn R.W."/>
            <person name="Sadler L.A."/>
        </authorList>
    </citation>
    <scope>NUCLEOTIDE SEQUENCE [GENOMIC DNA]</scope>
</reference>
<proteinExistence type="inferred from homology"/>
<evidence type="ECO:0000250" key="1"/>
<evidence type="ECO:0000256" key="2">
    <source>
        <dbReference type="SAM" id="MobiDB-lite"/>
    </source>
</evidence>
<evidence type="ECO:0000305" key="3"/>
<sequence>MARTKQTARKSTGAKAPRKQLASKAARKSAPATGGIKKPHR</sequence>
<dbReference type="EMBL" id="X17127">
    <property type="protein sequence ID" value="CAA34988.1"/>
    <property type="molecule type" value="Genomic_DNA"/>
</dbReference>
<dbReference type="PIR" id="S10261">
    <property type="entry name" value="S10261"/>
</dbReference>
<dbReference type="GO" id="GO:0000786">
    <property type="term" value="C:nucleosome"/>
    <property type="evidence" value="ECO:0007669"/>
    <property type="project" value="UniProtKB-KW"/>
</dbReference>
<dbReference type="GO" id="GO:0005634">
    <property type="term" value="C:nucleus"/>
    <property type="evidence" value="ECO:0007669"/>
    <property type="project" value="UniProtKB-SubCell"/>
</dbReference>
<dbReference type="GO" id="GO:0003677">
    <property type="term" value="F:DNA binding"/>
    <property type="evidence" value="ECO:0007669"/>
    <property type="project" value="UniProtKB-KW"/>
</dbReference>
<dbReference type="GO" id="GO:0046982">
    <property type="term" value="F:protein heterodimerization activity"/>
    <property type="evidence" value="ECO:0007669"/>
    <property type="project" value="InterPro"/>
</dbReference>
<dbReference type="GO" id="GO:0030527">
    <property type="term" value="F:structural constituent of chromatin"/>
    <property type="evidence" value="ECO:0007669"/>
    <property type="project" value="InterPro"/>
</dbReference>
<dbReference type="Gene3D" id="1.10.20.10">
    <property type="entry name" value="Histone, subunit A"/>
    <property type="match status" value="1"/>
</dbReference>
<dbReference type="InterPro" id="IPR009072">
    <property type="entry name" value="Histone-fold"/>
</dbReference>
<dbReference type="InterPro" id="IPR000164">
    <property type="entry name" value="Histone_H3/CENP-A"/>
</dbReference>
<dbReference type="PANTHER" id="PTHR11426">
    <property type="entry name" value="HISTONE H3"/>
    <property type="match status" value="1"/>
</dbReference>
<dbReference type="PRINTS" id="PR00622">
    <property type="entry name" value="HISTONEH3"/>
</dbReference>
<dbReference type="SUPFAM" id="SSF47113">
    <property type="entry name" value="Histone-fold"/>
    <property type="match status" value="1"/>
</dbReference>
<dbReference type="PROSITE" id="PS00322">
    <property type="entry name" value="HISTONE_H3_1"/>
    <property type="match status" value="1"/>
</dbReference>
<keyword id="KW-0158">Chromosome</keyword>
<keyword id="KW-0238">DNA-binding</keyword>
<keyword id="KW-0544">Nucleosome core</keyword>
<keyword id="KW-0539">Nucleus</keyword>
<accession>P69111</accession>
<accession>P17705</accession>
<feature type="initiator methionine" description="Removed" evidence="1">
    <location>
        <position position="1"/>
    </location>
</feature>
<feature type="chain" id="PRO_0000221332" description="Histone H3.2">
    <location>
        <begin position="2"/>
        <end position="41" status="greater than"/>
    </location>
</feature>
<feature type="region of interest" description="Disordered" evidence="2">
    <location>
        <begin position="1"/>
        <end position="41"/>
    </location>
</feature>
<feature type="non-terminal residue">
    <location>
        <position position="41"/>
    </location>
</feature>